<keyword id="KW-0998">Cell outer membrane</keyword>
<keyword id="KW-0406">Ion transport</keyword>
<keyword id="KW-0472">Membrane</keyword>
<keyword id="KW-0626">Porin</keyword>
<keyword id="KW-0732">Signal</keyword>
<keyword id="KW-0762">Sugar transport</keyword>
<keyword id="KW-0812">Transmembrane</keyword>
<keyword id="KW-1134">Transmembrane beta strand</keyword>
<keyword id="KW-0813">Transport</keyword>
<dbReference type="EMBL" id="AM933173">
    <property type="protein sequence ID" value="CAR39843.1"/>
    <property type="molecule type" value="Genomic_DNA"/>
</dbReference>
<dbReference type="RefSeq" id="WP_000973645.1">
    <property type="nucleotide sequence ID" value="NC_011274.1"/>
</dbReference>
<dbReference type="SMR" id="B5R7T0"/>
<dbReference type="KEGG" id="seg:SG4074"/>
<dbReference type="HOGENOM" id="CLU_032473_4_1_6"/>
<dbReference type="Proteomes" id="UP000008321">
    <property type="component" value="Chromosome"/>
</dbReference>
<dbReference type="GO" id="GO:0009279">
    <property type="term" value="C:cell outer membrane"/>
    <property type="evidence" value="ECO:0007669"/>
    <property type="project" value="UniProtKB-SubCell"/>
</dbReference>
<dbReference type="GO" id="GO:0046930">
    <property type="term" value="C:pore complex"/>
    <property type="evidence" value="ECO:0007669"/>
    <property type="project" value="UniProtKB-KW"/>
</dbReference>
<dbReference type="GO" id="GO:0042958">
    <property type="term" value="F:maltodextrin transmembrane transporter activity"/>
    <property type="evidence" value="ECO:0007669"/>
    <property type="project" value="InterPro"/>
</dbReference>
<dbReference type="GO" id="GO:0015481">
    <property type="term" value="F:maltose transporting porin activity"/>
    <property type="evidence" value="ECO:0007669"/>
    <property type="project" value="InterPro"/>
</dbReference>
<dbReference type="GO" id="GO:0006811">
    <property type="term" value="P:monoatomic ion transport"/>
    <property type="evidence" value="ECO:0007669"/>
    <property type="project" value="UniProtKB-KW"/>
</dbReference>
<dbReference type="CDD" id="cd01346">
    <property type="entry name" value="Maltoporin-like"/>
    <property type="match status" value="1"/>
</dbReference>
<dbReference type="FunFam" id="2.40.170.10:FF:000001">
    <property type="entry name" value="Maltoporin"/>
    <property type="match status" value="1"/>
</dbReference>
<dbReference type="Gene3D" id="2.40.170.10">
    <property type="entry name" value="Porin, LamB type"/>
    <property type="match status" value="1"/>
</dbReference>
<dbReference type="HAMAP" id="MF_01301">
    <property type="entry name" value="LamB"/>
    <property type="match status" value="1"/>
</dbReference>
<dbReference type="InterPro" id="IPR050286">
    <property type="entry name" value="G_neg_Bact_CarbUptk_Porin"/>
</dbReference>
<dbReference type="InterPro" id="IPR023738">
    <property type="entry name" value="Maltoporin"/>
</dbReference>
<dbReference type="InterPro" id="IPR003192">
    <property type="entry name" value="Porin_LamB"/>
</dbReference>
<dbReference type="InterPro" id="IPR036998">
    <property type="entry name" value="Porin_LamB_sf"/>
</dbReference>
<dbReference type="NCBIfam" id="NF006860">
    <property type="entry name" value="PRK09360.1"/>
    <property type="match status" value="1"/>
</dbReference>
<dbReference type="PANTHER" id="PTHR38762">
    <property type="entry name" value="CRYPTIC OUTER MEMBRANE PORIN BGLH-RELATED"/>
    <property type="match status" value="1"/>
</dbReference>
<dbReference type="PANTHER" id="PTHR38762:SF1">
    <property type="entry name" value="CRYPTIC OUTER MEMBRANE PORIN BGLH-RELATED"/>
    <property type="match status" value="1"/>
</dbReference>
<dbReference type="Pfam" id="PF02264">
    <property type="entry name" value="LamB"/>
    <property type="match status" value="1"/>
</dbReference>
<dbReference type="SUPFAM" id="SSF56935">
    <property type="entry name" value="Porins"/>
    <property type="match status" value="1"/>
</dbReference>
<proteinExistence type="inferred from homology"/>
<feature type="signal peptide" evidence="1">
    <location>
        <begin position="1"/>
        <end position="25"/>
    </location>
</feature>
<feature type="chain" id="PRO_5000398089" description="Maltoporin">
    <location>
        <begin position="26"/>
        <end position="452"/>
    </location>
</feature>
<feature type="site" description="Greasy slide, important in sugar transport" evidence="1">
    <location>
        <position position="31"/>
    </location>
</feature>
<feature type="site" description="Greasy slide, important in sugar transport" evidence="1">
    <location>
        <position position="66"/>
    </location>
</feature>
<feature type="site" description="Greasy slide, important in sugar transport" evidence="1">
    <location>
        <position position="99"/>
    </location>
</feature>
<feature type="site" description="Important in sugar transport" evidence="1">
    <location>
        <position position="143"/>
    </location>
</feature>
<feature type="site" description="Greasy slide, important in sugar transport" evidence="1">
    <location>
        <position position="252"/>
    </location>
</feature>
<feature type="site" description="Greasy slide, important in sugar transport" evidence="1">
    <location>
        <position position="393"/>
    </location>
</feature>
<feature type="site" description="Greasy slide, important in sugar transport" evidence="1">
    <location>
        <position position="451"/>
    </location>
</feature>
<comment type="function">
    <text evidence="1">Involved in the transport of maltose and maltodextrins.</text>
</comment>
<comment type="catalytic activity">
    <reaction evidence="1">
        <text>beta-maltose(in) = beta-maltose(out)</text>
        <dbReference type="Rhea" id="RHEA:29731"/>
        <dbReference type="ChEBI" id="CHEBI:18147"/>
    </reaction>
</comment>
<comment type="subunit">
    <text evidence="1">Homotrimer formed of three 18-stranded antiparallel beta-barrels, containing three independent channels.</text>
</comment>
<comment type="subcellular location">
    <subcellularLocation>
        <location evidence="1">Cell outer membrane</location>
        <topology evidence="1">Multi-pass membrane protein</topology>
    </subcellularLocation>
</comment>
<comment type="induction">
    <text evidence="1">By maltose.</text>
</comment>
<comment type="similarity">
    <text evidence="1">Belongs to the porin LamB (TC 1.B.3) family.</text>
</comment>
<name>LAMB_SALG2</name>
<protein>
    <recommendedName>
        <fullName evidence="1">Maltoporin</fullName>
    </recommendedName>
    <alternativeName>
        <fullName evidence="1">Maltose-inducible porin</fullName>
    </alternativeName>
</protein>
<evidence type="ECO:0000255" key="1">
    <source>
        <dbReference type="HAMAP-Rule" id="MF_01301"/>
    </source>
</evidence>
<accession>B5R7T0</accession>
<reference key="1">
    <citation type="journal article" date="2008" name="Genome Res.">
        <title>Comparative genome analysis of Salmonella enteritidis PT4 and Salmonella gallinarum 287/91 provides insights into evolutionary and host adaptation pathways.</title>
        <authorList>
            <person name="Thomson N.R."/>
            <person name="Clayton D.J."/>
            <person name="Windhorst D."/>
            <person name="Vernikos G."/>
            <person name="Davidson S."/>
            <person name="Churcher C."/>
            <person name="Quail M.A."/>
            <person name="Stevens M."/>
            <person name="Jones M.A."/>
            <person name="Watson M."/>
            <person name="Barron A."/>
            <person name="Layton A."/>
            <person name="Pickard D."/>
            <person name="Kingsley R.A."/>
            <person name="Bignell A."/>
            <person name="Clark L."/>
            <person name="Harris B."/>
            <person name="Ormond D."/>
            <person name="Abdellah Z."/>
            <person name="Brooks K."/>
            <person name="Cherevach I."/>
            <person name="Chillingworth T."/>
            <person name="Woodward J."/>
            <person name="Norberczak H."/>
            <person name="Lord A."/>
            <person name="Arrowsmith C."/>
            <person name="Jagels K."/>
            <person name="Moule S."/>
            <person name="Mungall K."/>
            <person name="Saunders M."/>
            <person name="Whitehead S."/>
            <person name="Chabalgoity J.A."/>
            <person name="Maskell D."/>
            <person name="Humphreys T."/>
            <person name="Roberts M."/>
            <person name="Barrow P.A."/>
            <person name="Dougan G."/>
            <person name="Parkhill J."/>
        </authorList>
    </citation>
    <scope>NUCLEOTIDE SEQUENCE [LARGE SCALE GENOMIC DNA]</scope>
    <source>
        <strain>287/91 / NCTC 13346</strain>
    </source>
</reference>
<gene>
    <name evidence="1" type="primary">lamB</name>
    <name type="ordered locus">SG4074</name>
</gene>
<sequence>MMITLRKLPLAVAVAAGVMSAQAMAVDFHGYARSGIGWTGSGGEQQCFQATGAQSKYRLGNECETYAELKLGQEVWKEGDKSFYFDTNVAYSVNQQNDWESTDPAFREANVQGKNLIEWLPGSTIWAGKRFYQRHDVHMIDFYYWDISGPGAGIENIDLGFGKLSLAATRSTEAGGSYTFSSQNIYDEVKDTANDVFDVRLAGLQTNPDGVLELGVDYGRANTTDGYKLADGASKDGWMFTAEHTQSMLKGYNKFVVQYATDAMTTQGKGQARGSDGSSSFTEELSDGTKINYANKVINNNGNMWRILDHGAISLGDKWDLMYVGMYQNIDWDNNLGTEWWTVGVRPMYKWTPIMSTLLEVGYDNVKSQQTGDRNNQYKITLAQQWQAGDSIWSRPAIRIFATYAKWDEKWGYIKDGDNISRYAAATNSGISTNSRGDSDEWTFGAQMEIWW</sequence>
<organism>
    <name type="scientific">Salmonella gallinarum (strain 287/91 / NCTC 13346)</name>
    <dbReference type="NCBI Taxonomy" id="550538"/>
    <lineage>
        <taxon>Bacteria</taxon>
        <taxon>Pseudomonadati</taxon>
        <taxon>Pseudomonadota</taxon>
        <taxon>Gammaproteobacteria</taxon>
        <taxon>Enterobacterales</taxon>
        <taxon>Enterobacteriaceae</taxon>
        <taxon>Salmonella</taxon>
    </lineage>
</organism>